<organismHost>
    <name type="scientific">Aves</name>
    <dbReference type="NCBI Taxonomy" id="8782"/>
</organismHost>
<organismHost>
    <name type="scientific">Felis catus</name>
    <name type="common">Cat</name>
    <name type="synonym">Felis silvestris catus</name>
    <dbReference type="NCBI Taxonomy" id="9685"/>
</organismHost>
<organismHost>
    <name type="scientific">Homo sapiens</name>
    <name type="common">Human</name>
    <dbReference type="NCBI Taxonomy" id="9606"/>
</organismHost>
<organismHost>
    <name type="scientific">Panthera pardus</name>
    <name type="common">Leopard</name>
    <name type="synonym">Felis pardus</name>
    <dbReference type="NCBI Taxonomy" id="9691"/>
</organismHost>
<organismHost>
    <name type="scientific">Panthera tigris</name>
    <name type="common">Tiger</name>
    <dbReference type="NCBI Taxonomy" id="9694"/>
</organismHost>
<organismHost>
    <name type="scientific">Sus scrofa</name>
    <name type="common">Pig</name>
    <dbReference type="NCBI Taxonomy" id="9823"/>
</organismHost>
<comment type="function">
    <text evidence="1">RNA-dependent RNA polymerase which is responsible for replication and transcription of virus RNA segments. The transcription of viral mRNAs occurs by a unique mechanism called cap-snatching. 5' methylated caps of cellular mRNAs are cleaved after 10-13 nucleotides by PA. In turn, these short capped RNAs are used as primers by PB1 for transcription of viral mRNAs. During virus replication, PB1 initiates RNA synthesis and copy vRNA into complementary RNA (cRNA) which in turn serves as a template for the production of more vRNAs.</text>
</comment>
<comment type="catalytic activity">
    <reaction evidence="1">
        <text>RNA(n) + a ribonucleoside 5'-triphosphate = RNA(n+1) + diphosphate</text>
        <dbReference type="Rhea" id="RHEA:21248"/>
        <dbReference type="Rhea" id="RHEA-COMP:14527"/>
        <dbReference type="Rhea" id="RHEA-COMP:17342"/>
        <dbReference type="ChEBI" id="CHEBI:33019"/>
        <dbReference type="ChEBI" id="CHEBI:61557"/>
        <dbReference type="ChEBI" id="CHEBI:140395"/>
        <dbReference type="EC" id="2.7.7.48"/>
    </reaction>
</comment>
<comment type="subunit">
    <text evidence="1">Influenza RNA polymerase is composed of three subunits: PB1, PB2 and PA. Interacts (via N-terminus) with PA (via C-terminus). Interacts (via C-terminus) with PB2 (via N-terminus); this interaction is essential for transcription initiation.</text>
</comment>
<comment type="subcellular location">
    <subcellularLocation>
        <location evidence="1">Host nucleus</location>
    </subcellularLocation>
    <subcellularLocation>
        <location evidence="1">Host cytoplasm</location>
    </subcellularLocation>
</comment>
<comment type="PTM">
    <text evidence="1">Phosphorylated by host PRKCA.</text>
</comment>
<comment type="similarity">
    <text evidence="1">Belongs to the influenza viruses polymerase PB1 family.</text>
</comment>
<feature type="chain" id="PRO_0000311170" description="RNA-directed RNA polymerase catalytic subunit">
    <location>
        <begin position="1"/>
        <end position="757"/>
    </location>
</feature>
<feature type="domain" description="RdRp catalytic" evidence="1">
    <location>
        <begin position="286"/>
        <end position="483"/>
    </location>
</feature>
<feature type="region of interest" description="Disordered" evidence="2">
    <location>
        <begin position="52"/>
        <end position="82"/>
    </location>
</feature>
<feature type="region of interest" description="Promoter-binding site" evidence="1">
    <location>
        <begin position="249"/>
        <end position="256"/>
    </location>
</feature>
<feature type="short sequence motif" description="Nuclear localization signal" evidence="1">
    <location>
        <begin position="187"/>
        <end position="195"/>
    </location>
</feature>
<feature type="short sequence motif" description="Nuclear localization signal" evidence="1">
    <location>
        <begin position="203"/>
        <end position="216"/>
    </location>
</feature>
<feature type="compositionally biased region" description="Polar residues" evidence="2">
    <location>
        <begin position="55"/>
        <end position="64"/>
    </location>
</feature>
<keyword id="KW-1262">Eukaryotic host gene expression shutoff by virus</keyword>
<keyword id="KW-1191">Eukaryotic host transcription shutoff by virus</keyword>
<keyword id="KW-1035">Host cytoplasm</keyword>
<keyword id="KW-1190">Host gene expression shutoff by virus</keyword>
<keyword id="KW-1048">Host nucleus</keyword>
<keyword id="KW-0945">Host-virus interaction</keyword>
<keyword id="KW-1104">Inhibition of host RNA polymerase II by virus</keyword>
<keyword id="KW-0547">Nucleotide-binding</keyword>
<keyword id="KW-0548">Nucleotidyltransferase</keyword>
<keyword id="KW-0597">Phosphoprotein</keyword>
<keyword id="KW-0696">RNA-directed RNA polymerase</keyword>
<keyword id="KW-0808">Transferase</keyword>
<keyword id="KW-0693">Viral RNA replication</keyword>
<keyword id="KW-1195">Viral transcription</keyword>
<reference key="1">
    <citation type="journal article" date="2004" name="Proc. Natl. Acad. Sci. U.S.A.">
        <title>H5N1 influenza: a protean pandemic threat.</title>
        <authorList>
            <person name="Guan Y."/>
            <person name="Poon L.L.M."/>
            <person name="Cheung C.Y."/>
            <person name="Ellis T.M."/>
            <person name="Lim W."/>
            <person name="Lipatov A.S."/>
            <person name="Chan K.H."/>
            <person name="Sturm-Ramirez K.M."/>
            <person name="Cheung C.L."/>
            <person name="Leung Y.H.C."/>
            <person name="Yuen K.Y."/>
            <person name="Webster R.G."/>
            <person name="Peiris J.S.M."/>
        </authorList>
    </citation>
    <scope>NUCLEOTIDE SEQUENCE [GENOMIC RNA]</scope>
</reference>
<gene>
    <name evidence="1" type="primary">PB1</name>
</gene>
<accession>Q6J856</accession>
<organism>
    <name type="scientific">Influenza A virus (strain A/Hong Kong/212/2003 H5N1 genotype Z+)</name>
    <dbReference type="NCBI Taxonomy" id="279794"/>
    <lineage>
        <taxon>Viruses</taxon>
        <taxon>Riboviria</taxon>
        <taxon>Orthornavirae</taxon>
        <taxon>Negarnaviricota</taxon>
        <taxon>Polyploviricotina</taxon>
        <taxon>Insthoviricetes</taxon>
        <taxon>Articulavirales</taxon>
        <taxon>Orthomyxoviridae</taxon>
        <taxon>Alphainfluenzavirus</taxon>
        <taxon>Alphainfluenzavirus influenzae</taxon>
        <taxon>Influenza A virus</taxon>
    </lineage>
</organism>
<name>RDRP_I03A0</name>
<evidence type="ECO:0000255" key="1">
    <source>
        <dbReference type="HAMAP-Rule" id="MF_04065"/>
    </source>
</evidence>
<evidence type="ECO:0000256" key="2">
    <source>
        <dbReference type="SAM" id="MobiDB-lite"/>
    </source>
</evidence>
<protein>
    <recommendedName>
        <fullName evidence="1">RNA-directed RNA polymerase catalytic subunit</fullName>
        <ecNumber evidence="1">2.7.7.48</ecNumber>
    </recommendedName>
    <alternativeName>
        <fullName evidence="1">Polymerase basic protein 1</fullName>
        <shortName evidence="1">PB1</shortName>
    </alternativeName>
    <alternativeName>
        <fullName evidence="1">RNA-directed RNA polymerase subunit P1</fullName>
    </alternativeName>
</protein>
<proteinExistence type="inferred from homology"/>
<sequence length="757" mass="86452">MDVNPTLLFLKVPVQNAISTTFPYTGDPPYSHGTGTGYTMDTVNRTHQYSEKGKWTTNTETGAPQLNPIDGPLPEDNEPSGYAQTDCVLEAMAFLEESHPGIFENSCLETMEIVQQTRVDKLTQGRQTYDWTLNRNQPAATALANTIEIFRSNGLTASESGRLIDFLKDVMESMDKEEMEITTHFQRKRRVRDNMTKKMVTQRTIGKKKQRLNKKSYLIRALTLNTMTKDAERGKLKRRAIATPGMQIRGFVYFVETLARSICEKLEQSGLPVGGNEKKAKLANVVRKMMTNSQDTELSFTITGDNTKWNENQNPRMFLAMITYITRNQPEWFRNVLSIAPIMFSNKMARLGKGYMFESKSMKLRTQIPAEMLANIDLKYFNELTKKKIEKIRPLLIDGTASLSPGMMMGMFNMLSTVLGVSILNLGQKRYTKTTYWWDGLQSSDDFALIVNAPNHEGIQAGVDRFYRTCKLVGINMSKKKSYINRTGTFEFTSFFYRYGFVANFSMELPSFGVSGINESADMSIGVTVIKNNMINNDLGPATAQMALQLFIKDYRYTYRCHRGDTQIQTRRSFELKKLWEQTRSKAGLLVSDGGPNLYNIRNLHIPEVCLKWELMDEDYQGRLCNPLNPFVSHKEIESVNNAVVMPAHGPAKSMEYDAVATTHSWIPKRNRSILNTSQRGILEDEQMYQKCCNLFEKFFPSSSYRRPVGISSMVEAMVSRARIDARIDFESGRIKKEEFAEIMKICSTIEELRRQK</sequence>
<dbReference type="EC" id="2.7.7.48" evidence="1"/>
<dbReference type="EMBL" id="AY576392">
    <property type="protein sequence ID" value="AAT39041.1"/>
    <property type="molecule type" value="Genomic_DNA"/>
</dbReference>
<dbReference type="SMR" id="Q6J856"/>
<dbReference type="GO" id="GO:0030430">
    <property type="term" value="C:host cell cytoplasm"/>
    <property type="evidence" value="ECO:0007669"/>
    <property type="project" value="UniProtKB-SubCell"/>
</dbReference>
<dbReference type="GO" id="GO:0042025">
    <property type="term" value="C:host cell nucleus"/>
    <property type="evidence" value="ECO:0007669"/>
    <property type="project" value="UniProtKB-SubCell"/>
</dbReference>
<dbReference type="GO" id="GO:0000166">
    <property type="term" value="F:nucleotide binding"/>
    <property type="evidence" value="ECO:0007669"/>
    <property type="project" value="UniProtKB-UniRule"/>
</dbReference>
<dbReference type="GO" id="GO:0003723">
    <property type="term" value="F:RNA binding"/>
    <property type="evidence" value="ECO:0007669"/>
    <property type="project" value="InterPro"/>
</dbReference>
<dbReference type="GO" id="GO:0003968">
    <property type="term" value="F:RNA-directed RNA polymerase activity"/>
    <property type="evidence" value="ECO:0007669"/>
    <property type="project" value="UniProtKB-UniRule"/>
</dbReference>
<dbReference type="GO" id="GO:0006351">
    <property type="term" value="P:DNA-templated transcription"/>
    <property type="evidence" value="ECO:0007669"/>
    <property type="project" value="UniProtKB-UniRule"/>
</dbReference>
<dbReference type="GO" id="GO:0039657">
    <property type="term" value="P:symbiont-mediated suppression of host gene expression"/>
    <property type="evidence" value="ECO:0007669"/>
    <property type="project" value="UniProtKB-KW"/>
</dbReference>
<dbReference type="GO" id="GO:0039523">
    <property type="term" value="P:symbiont-mediated suppression of host mRNA transcription via inhibition of RNA polymerase II activity"/>
    <property type="evidence" value="ECO:0007669"/>
    <property type="project" value="UniProtKB-UniRule"/>
</dbReference>
<dbReference type="GO" id="GO:0039694">
    <property type="term" value="P:viral RNA genome replication"/>
    <property type="evidence" value="ECO:0007669"/>
    <property type="project" value="UniProtKB-UniRule"/>
</dbReference>
<dbReference type="GO" id="GO:0019083">
    <property type="term" value="P:viral transcription"/>
    <property type="evidence" value="ECO:0007669"/>
    <property type="project" value="UniProtKB-KW"/>
</dbReference>
<dbReference type="Gene3D" id="6.10.140.720">
    <property type="match status" value="1"/>
</dbReference>
<dbReference type="HAMAP" id="MF_04065">
    <property type="entry name" value="INFV_RDRP"/>
    <property type="match status" value="1"/>
</dbReference>
<dbReference type="InterPro" id="IPR007099">
    <property type="entry name" value="RNA-dir_pol_NSvirus"/>
</dbReference>
<dbReference type="InterPro" id="IPR001407">
    <property type="entry name" value="RNA_pol_PB1_influenza"/>
</dbReference>
<dbReference type="Pfam" id="PF00602">
    <property type="entry name" value="Flu_PB1"/>
    <property type="match status" value="1"/>
</dbReference>
<dbReference type="PIRSF" id="PIRSF000827">
    <property type="entry name" value="RdRPol_OMV"/>
    <property type="match status" value="1"/>
</dbReference>
<dbReference type="PROSITE" id="PS50525">
    <property type="entry name" value="RDRP_SSRNA_NEG_SEG"/>
    <property type="match status" value="1"/>
</dbReference>